<accession>P34154</accession>
<sequence>IVGGTEVTPGEIPYQLSFQD</sequence>
<proteinExistence type="evidence at protein level"/>
<name>COG2_CHIOP</name>
<keyword id="KW-0177">Collagen degradation</keyword>
<keyword id="KW-0903">Direct protein sequencing</keyword>
<keyword id="KW-0378">Hydrolase</keyword>
<keyword id="KW-0645">Protease</keyword>
<keyword id="KW-0720">Serine protease</keyword>
<organism>
    <name type="scientific">Chionoecetes opilio</name>
    <name type="common">Atlantic snow crab</name>
    <name type="synonym">Cancer opilio</name>
    <dbReference type="NCBI Taxonomy" id="41210"/>
    <lineage>
        <taxon>Eukaryota</taxon>
        <taxon>Metazoa</taxon>
        <taxon>Ecdysozoa</taxon>
        <taxon>Arthropoda</taxon>
        <taxon>Crustacea</taxon>
        <taxon>Multicrustacea</taxon>
        <taxon>Malacostraca</taxon>
        <taxon>Eumalacostraca</taxon>
        <taxon>Eucarida</taxon>
        <taxon>Decapoda</taxon>
        <taxon>Pleocyemata</taxon>
        <taxon>Brachyura</taxon>
        <taxon>Eubrachyura</taxon>
        <taxon>Majoidea</taxon>
        <taxon>Majidae</taxon>
        <taxon>Chionoecetes</taxon>
    </lineage>
</organism>
<reference key="1">
    <citation type="journal article" date="1991" name="Dokl. Akad. Nauk SSSR">
        <title>Isolation and characteristics of collagenolytic enzymes from the hepatopancreas of the crab Chionoecetes opilio.</title>
        <authorList>
            <person name="Klimova O.A."/>
            <person name="Vedishcheva Y.V."/>
            <person name="Strongin A.Y."/>
        </authorList>
    </citation>
    <scope>PROTEIN SEQUENCE</scope>
    <source>
        <tissue>Hepatopancreas</tissue>
    </source>
</reference>
<evidence type="ECO:0000255" key="1">
    <source>
        <dbReference type="PROSITE-ProRule" id="PRU00274"/>
    </source>
</evidence>
<evidence type="ECO:0000256" key="2">
    <source>
        <dbReference type="SAM" id="MobiDB-lite"/>
    </source>
</evidence>
<protein>
    <recommendedName>
        <fullName>Collagenolytic protease 35 kDa 2</fullName>
        <ecNumber>3.4.21.32</ecNumber>
    </recommendedName>
    <alternativeName>
        <fullName>Collagenolytic protease 35 kDa II</fullName>
    </alternativeName>
</protein>
<feature type="chain" id="PRO_0000088671" description="Collagenolytic protease 35 kDa 2">
    <location>
        <begin position="1"/>
        <end position="20" status="greater than"/>
    </location>
</feature>
<feature type="domain" description="Peptidase S1" evidence="1">
    <location>
        <begin position="1"/>
        <end position="20" status="greater than"/>
    </location>
</feature>
<feature type="region of interest" description="Disordered" evidence="2">
    <location>
        <begin position="1"/>
        <end position="20"/>
    </location>
</feature>
<feature type="non-terminal residue">
    <location>
        <position position="20"/>
    </location>
</feature>
<dbReference type="EC" id="3.4.21.32"/>
<dbReference type="GO" id="GO:0008236">
    <property type="term" value="F:serine-type peptidase activity"/>
    <property type="evidence" value="ECO:0007669"/>
    <property type="project" value="UniProtKB-KW"/>
</dbReference>
<dbReference type="GO" id="GO:0030574">
    <property type="term" value="P:collagen catabolic process"/>
    <property type="evidence" value="ECO:0007669"/>
    <property type="project" value="UniProtKB-KW"/>
</dbReference>
<dbReference type="GO" id="GO:0006508">
    <property type="term" value="P:proteolysis"/>
    <property type="evidence" value="ECO:0007669"/>
    <property type="project" value="UniProtKB-KW"/>
</dbReference>
<comment type="function">
    <text>This enzyme is a serine protease capable of degrading the native triple helix of collagen.</text>
</comment>
<comment type="catalytic activity">
    <reaction>
        <text>Hydrolysis of proteins, with broad specificity for peptide bonds. Native collagen is cleaved about 75% of the length of the molecule from the N-terminus. Low activity on small molecule substrates of both trypsin and chymotrypsin.</text>
        <dbReference type="EC" id="3.4.21.32"/>
    </reaction>
</comment>
<comment type="similarity">
    <text evidence="1">Belongs to the peptidase S1 family.</text>
</comment>